<evidence type="ECO:0000255" key="1">
    <source>
        <dbReference type="HAMAP-Rule" id="MF_01536"/>
    </source>
</evidence>
<accession>Q9K8M3</accession>
<name>Y2983_HALH5</name>
<dbReference type="EMBL" id="BA000004">
    <property type="protein sequence ID" value="BAB06702.1"/>
    <property type="molecule type" value="Genomic_DNA"/>
</dbReference>
<dbReference type="PIR" id="G84022">
    <property type="entry name" value="G84022"/>
</dbReference>
<dbReference type="RefSeq" id="WP_010899127.1">
    <property type="nucleotide sequence ID" value="NC_002570.2"/>
</dbReference>
<dbReference type="SMR" id="Q9K8M3"/>
<dbReference type="STRING" id="272558.gene:10728893"/>
<dbReference type="GeneID" id="87598504"/>
<dbReference type="KEGG" id="bha:BH2983"/>
<dbReference type="eggNOG" id="ENOG5032W2Q">
    <property type="taxonomic scope" value="Bacteria"/>
</dbReference>
<dbReference type="HOGENOM" id="CLU_146641_1_0_9"/>
<dbReference type="OrthoDB" id="2365314at2"/>
<dbReference type="Proteomes" id="UP000001258">
    <property type="component" value="Chromosome"/>
</dbReference>
<dbReference type="GO" id="GO:0005886">
    <property type="term" value="C:plasma membrane"/>
    <property type="evidence" value="ECO:0007669"/>
    <property type="project" value="UniProtKB-SubCell"/>
</dbReference>
<dbReference type="HAMAP" id="MF_01536">
    <property type="entry name" value="UPF0344"/>
    <property type="match status" value="1"/>
</dbReference>
<dbReference type="InterPro" id="IPR010899">
    <property type="entry name" value="UPF0344"/>
</dbReference>
<dbReference type="NCBIfam" id="NF010198">
    <property type="entry name" value="PRK13673.1-5"/>
    <property type="match status" value="1"/>
</dbReference>
<dbReference type="Pfam" id="PF07457">
    <property type="entry name" value="DUF1516"/>
    <property type="match status" value="1"/>
</dbReference>
<proteinExistence type="inferred from homology"/>
<keyword id="KW-1003">Cell membrane</keyword>
<keyword id="KW-0472">Membrane</keyword>
<keyword id="KW-1185">Reference proteome</keyword>
<keyword id="KW-0812">Transmembrane</keyword>
<keyword id="KW-1133">Transmembrane helix</keyword>
<organism>
    <name type="scientific">Halalkalibacterium halodurans (strain ATCC BAA-125 / DSM 18197 / FERM 7344 / JCM 9153 / C-125)</name>
    <name type="common">Bacillus halodurans</name>
    <dbReference type="NCBI Taxonomy" id="272558"/>
    <lineage>
        <taxon>Bacteria</taxon>
        <taxon>Bacillati</taxon>
        <taxon>Bacillota</taxon>
        <taxon>Bacilli</taxon>
        <taxon>Bacillales</taxon>
        <taxon>Bacillaceae</taxon>
        <taxon>Halalkalibacterium (ex Joshi et al. 2022)</taxon>
    </lineage>
</organism>
<feature type="chain" id="PRO_0000105882" description="UPF0344 protein BH2983">
    <location>
        <begin position="1"/>
        <end position="124"/>
    </location>
</feature>
<feature type="transmembrane region" description="Helical" evidence="1">
    <location>
        <begin position="15"/>
        <end position="35"/>
    </location>
</feature>
<feature type="transmembrane region" description="Helical" evidence="1">
    <location>
        <begin position="40"/>
        <end position="60"/>
    </location>
</feature>
<feature type="transmembrane region" description="Helical" evidence="1">
    <location>
        <begin position="61"/>
        <end position="81"/>
    </location>
</feature>
<feature type="transmembrane region" description="Helical" evidence="1">
    <location>
        <begin position="102"/>
        <end position="122"/>
    </location>
</feature>
<comment type="subcellular location">
    <subcellularLocation>
        <location evidence="1">Cell membrane</location>
        <topology evidence="1">Multi-pass membrane protein</topology>
    </subcellularLocation>
</comment>
<comment type="similarity">
    <text evidence="1">Belongs to the UPF0344 family.</text>
</comment>
<sequence>MSPELYNIFYESHRGSWAILIILFLVSYFLIKAGKGKAGKILHMIVRLFFVIMLITGAGMLVYWQFAFLFIVKGVLAIVLIYAMEMLLTRTSKGTIGQQARIYWIVFITCLVLVALIGYNVISF</sequence>
<protein>
    <recommendedName>
        <fullName evidence="1">UPF0344 protein BH2983</fullName>
    </recommendedName>
</protein>
<reference key="1">
    <citation type="journal article" date="2000" name="Nucleic Acids Res.">
        <title>Complete genome sequence of the alkaliphilic bacterium Bacillus halodurans and genomic sequence comparison with Bacillus subtilis.</title>
        <authorList>
            <person name="Takami H."/>
            <person name="Nakasone K."/>
            <person name="Takaki Y."/>
            <person name="Maeno G."/>
            <person name="Sasaki R."/>
            <person name="Masui N."/>
            <person name="Fuji F."/>
            <person name="Hirama C."/>
            <person name="Nakamura Y."/>
            <person name="Ogasawara N."/>
            <person name="Kuhara S."/>
            <person name="Horikoshi K."/>
        </authorList>
    </citation>
    <scope>NUCLEOTIDE SEQUENCE [LARGE SCALE GENOMIC DNA]</scope>
    <source>
        <strain>ATCC BAA-125 / DSM 18197 / FERM 7344 / JCM 9153 / C-125</strain>
    </source>
</reference>
<gene>
    <name type="ordered locus">BH2983</name>
</gene>